<dbReference type="EC" id="6.1.1.11" evidence="1"/>
<dbReference type="EMBL" id="CP001091">
    <property type="protein sequence ID" value="ACE61579.1"/>
    <property type="molecule type" value="Genomic_DNA"/>
</dbReference>
<dbReference type="RefSeq" id="WP_005601191.1">
    <property type="nucleotide sequence ID" value="NC_010939.1"/>
</dbReference>
<dbReference type="SMR" id="B3H1K7"/>
<dbReference type="KEGG" id="apa:APP7_0927"/>
<dbReference type="HOGENOM" id="CLU_023797_1_1_6"/>
<dbReference type="UniPathway" id="UPA00906">
    <property type="reaction ID" value="UER00895"/>
</dbReference>
<dbReference type="Proteomes" id="UP000001226">
    <property type="component" value="Chromosome"/>
</dbReference>
<dbReference type="GO" id="GO:0005737">
    <property type="term" value="C:cytoplasm"/>
    <property type="evidence" value="ECO:0007669"/>
    <property type="project" value="UniProtKB-SubCell"/>
</dbReference>
<dbReference type="GO" id="GO:0005524">
    <property type="term" value="F:ATP binding"/>
    <property type="evidence" value="ECO:0007669"/>
    <property type="project" value="UniProtKB-UniRule"/>
</dbReference>
<dbReference type="GO" id="GO:0004828">
    <property type="term" value="F:serine-tRNA ligase activity"/>
    <property type="evidence" value="ECO:0007669"/>
    <property type="project" value="UniProtKB-UniRule"/>
</dbReference>
<dbReference type="GO" id="GO:0016260">
    <property type="term" value="P:selenocysteine biosynthetic process"/>
    <property type="evidence" value="ECO:0007669"/>
    <property type="project" value="UniProtKB-UniRule"/>
</dbReference>
<dbReference type="GO" id="GO:0006434">
    <property type="term" value="P:seryl-tRNA aminoacylation"/>
    <property type="evidence" value="ECO:0007669"/>
    <property type="project" value="UniProtKB-UniRule"/>
</dbReference>
<dbReference type="CDD" id="cd00770">
    <property type="entry name" value="SerRS_core"/>
    <property type="match status" value="1"/>
</dbReference>
<dbReference type="Gene3D" id="3.30.930.10">
    <property type="entry name" value="Bira Bifunctional Protein, Domain 2"/>
    <property type="match status" value="1"/>
</dbReference>
<dbReference type="Gene3D" id="1.10.287.40">
    <property type="entry name" value="Serine-tRNA synthetase, tRNA binding domain"/>
    <property type="match status" value="1"/>
</dbReference>
<dbReference type="HAMAP" id="MF_00176">
    <property type="entry name" value="Ser_tRNA_synth_type1"/>
    <property type="match status" value="1"/>
</dbReference>
<dbReference type="InterPro" id="IPR002314">
    <property type="entry name" value="aa-tRNA-synt_IIb"/>
</dbReference>
<dbReference type="InterPro" id="IPR006195">
    <property type="entry name" value="aa-tRNA-synth_II"/>
</dbReference>
<dbReference type="InterPro" id="IPR045864">
    <property type="entry name" value="aa-tRNA-synth_II/BPL/LPL"/>
</dbReference>
<dbReference type="InterPro" id="IPR002317">
    <property type="entry name" value="Ser-tRNA-ligase_type_1"/>
</dbReference>
<dbReference type="InterPro" id="IPR015866">
    <property type="entry name" value="Ser-tRNA-synth_1_N"/>
</dbReference>
<dbReference type="InterPro" id="IPR042103">
    <property type="entry name" value="SerRS_1_N_sf"/>
</dbReference>
<dbReference type="InterPro" id="IPR033729">
    <property type="entry name" value="SerRS_core"/>
</dbReference>
<dbReference type="InterPro" id="IPR010978">
    <property type="entry name" value="tRNA-bd_arm"/>
</dbReference>
<dbReference type="NCBIfam" id="TIGR00414">
    <property type="entry name" value="serS"/>
    <property type="match status" value="1"/>
</dbReference>
<dbReference type="PANTHER" id="PTHR43697:SF1">
    <property type="entry name" value="SERINE--TRNA LIGASE"/>
    <property type="match status" value="1"/>
</dbReference>
<dbReference type="PANTHER" id="PTHR43697">
    <property type="entry name" value="SERYL-TRNA SYNTHETASE"/>
    <property type="match status" value="1"/>
</dbReference>
<dbReference type="Pfam" id="PF02403">
    <property type="entry name" value="Seryl_tRNA_N"/>
    <property type="match status" value="1"/>
</dbReference>
<dbReference type="Pfam" id="PF00587">
    <property type="entry name" value="tRNA-synt_2b"/>
    <property type="match status" value="1"/>
</dbReference>
<dbReference type="PIRSF" id="PIRSF001529">
    <property type="entry name" value="Ser-tRNA-synth_IIa"/>
    <property type="match status" value="1"/>
</dbReference>
<dbReference type="PRINTS" id="PR00981">
    <property type="entry name" value="TRNASYNTHSER"/>
</dbReference>
<dbReference type="SUPFAM" id="SSF55681">
    <property type="entry name" value="Class II aaRS and biotin synthetases"/>
    <property type="match status" value="1"/>
</dbReference>
<dbReference type="SUPFAM" id="SSF46589">
    <property type="entry name" value="tRNA-binding arm"/>
    <property type="match status" value="1"/>
</dbReference>
<dbReference type="PROSITE" id="PS50862">
    <property type="entry name" value="AA_TRNA_LIGASE_II"/>
    <property type="match status" value="1"/>
</dbReference>
<keyword id="KW-0030">Aminoacyl-tRNA synthetase</keyword>
<keyword id="KW-0067">ATP-binding</keyword>
<keyword id="KW-0963">Cytoplasm</keyword>
<keyword id="KW-0436">Ligase</keyword>
<keyword id="KW-0547">Nucleotide-binding</keyword>
<keyword id="KW-0648">Protein biosynthesis</keyword>
<name>SYS_ACTP7</name>
<gene>
    <name evidence="1" type="primary">serS</name>
    <name type="ordered locus">APP7_0927</name>
</gene>
<sequence length="435" mass="48366">MIDQNLLRTNLDDVANALKVKRGFTLDVESVKALEEKRKALQVKTETLQAERNARSKNIGAAKARGEDISALLAEVDNMGNELNEAKVALDQVQAEIRELLLSVPNLPADEVPLGKDDTENLEVSRWGEPRQFDFEVKDHVALGEALNGLDFAAGVKLTASRFVVMKGKLARLHRALSQFMLDLHTEQHGYVETNVPFLVNHDTLFGTGQLPKFGEDLFHTQPLTGQDPNETQRPFSLIPTAEVPVTNLVRDEIIDEDSLPLRYTAHTPCFRSEAGSYGRDTRGLIRMHQFEKVEMVQIVAPEKSMEALEELTGHAEKVLQLLGLPYRKVLLCTGDMGFGSAKTYDLEVWLPAQNTYREISSCSNMWDFQARRMSARCKAKGDKKTRLVHTLNGSGLAVGRTLVAVLENYQNADGSITVPEVLRPYMGGVEVITA</sequence>
<proteinExistence type="inferred from homology"/>
<evidence type="ECO:0000255" key="1">
    <source>
        <dbReference type="HAMAP-Rule" id="MF_00176"/>
    </source>
</evidence>
<comment type="function">
    <text evidence="1">Catalyzes the attachment of serine to tRNA(Ser). Is also able to aminoacylate tRNA(Sec) with serine, to form the misacylated tRNA L-seryl-tRNA(Sec), which will be further converted into selenocysteinyl-tRNA(Sec).</text>
</comment>
<comment type="catalytic activity">
    <reaction evidence="1">
        <text>tRNA(Ser) + L-serine + ATP = L-seryl-tRNA(Ser) + AMP + diphosphate + H(+)</text>
        <dbReference type="Rhea" id="RHEA:12292"/>
        <dbReference type="Rhea" id="RHEA-COMP:9669"/>
        <dbReference type="Rhea" id="RHEA-COMP:9703"/>
        <dbReference type="ChEBI" id="CHEBI:15378"/>
        <dbReference type="ChEBI" id="CHEBI:30616"/>
        <dbReference type="ChEBI" id="CHEBI:33019"/>
        <dbReference type="ChEBI" id="CHEBI:33384"/>
        <dbReference type="ChEBI" id="CHEBI:78442"/>
        <dbReference type="ChEBI" id="CHEBI:78533"/>
        <dbReference type="ChEBI" id="CHEBI:456215"/>
        <dbReference type="EC" id="6.1.1.11"/>
    </reaction>
</comment>
<comment type="catalytic activity">
    <reaction evidence="1">
        <text>tRNA(Sec) + L-serine + ATP = L-seryl-tRNA(Sec) + AMP + diphosphate + H(+)</text>
        <dbReference type="Rhea" id="RHEA:42580"/>
        <dbReference type="Rhea" id="RHEA-COMP:9742"/>
        <dbReference type="Rhea" id="RHEA-COMP:10128"/>
        <dbReference type="ChEBI" id="CHEBI:15378"/>
        <dbReference type="ChEBI" id="CHEBI:30616"/>
        <dbReference type="ChEBI" id="CHEBI:33019"/>
        <dbReference type="ChEBI" id="CHEBI:33384"/>
        <dbReference type="ChEBI" id="CHEBI:78442"/>
        <dbReference type="ChEBI" id="CHEBI:78533"/>
        <dbReference type="ChEBI" id="CHEBI:456215"/>
        <dbReference type="EC" id="6.1.1.11"/>
    </reaction>
</comment>
<comment type="pathway">
    <text evidence="1">Aminoacyl-tRNA biosynthesis; selenocysteinyl-tRNA(Sec) biosynthesis; L-seryl-tRNA(Sec) from L-serine and tRNA(Sec): step 1/1.</text>
</comment>
<comment type="subunit">
    <text evidence="1">Homodimer. The tRNA molecule binds across the dimer.</text>
</comment>
<comment type="subcellular location">
    <subcellularLocation>
        <location evidence="1">Cytoplasm</location>
    </subcellularLocation>
</comment>
<comment type="domain">
    <text evidence="1">Consists of two distinct domains, a catalytic core and a N-terminal extension that is involved in tRNA binding.</text>
</comment>
<comment type="similarity">
    <text evidence="1">Belongs to the class-II aminoacyl-tRNA synthetase family. Type-1 seryl-tRNA synthetase subfamily.</text>
</comment>
<feature type="chain" id="PRO_1000098026" description="Serine--tRNA ligase">
    <location>
        <begin position="1"/>
        <end position="435"/>
    </location>
</feature>
<feature type="binding site" evidence="1">
    <location>
        <begin position="241"/>
        <end position="243"/>
    </location>
    <ligand>
        <name>L-serine</name>
        <dbReference type="ChEBI" id="CHEBI:33384"/>
    </ligand>
</feature>
<feature type="binding site" evidence="1">
    <location>
        <begin position="272"/>
        <end position="274"/>
    </location>
    <ligand>
        <name>ATP</name>
        <dbReference type="ChEBI" id="CHEBI:30616"/>
    </ligand>
</feature>
<feature type="binding site" evidence="1">
    <location>
        <position position="295"/>
    </location>
    <ligand>
        <name>L-serine</name>
        <dbReference type="ChEBI" id="CHEBI:33384"/>
    </ligand>
</feature>
<feature type="binding site" evidence="1">
    <location>
        <begin position="359"/>
        <end position="362"/>
    </location>
    <ligand>
        <name>ATP</name>
        <dbReference type="ChEBI" id="CHEBI:30616"/>
    </ligand>
</feature>
<feature type="binding site" evidence="1">
    <location>
        <position position="395"/>
    </location>
    <ligand>
        <name>L-serine</name>
        <dbReference type="ChEBI" id="CHEBI:33384"/>
    </ligand>
</feature>
<protein>
    <recommendedName>
        <fullName evidence="1">Serine--tRNA ligase</fullName>
        <ecNumber evidence="1">6.1.1.11</ecNumber>
    </recommendedName>
    <alternativeName>
        <fullName evidence="1">Seryl-tRNA synthetase</fullName>
        <shortName evidence="1">SerRS</shortName>
    </alternativeName>
    <alternativeName>
        <fullName evidence="1">Seryl-tRNA(Ser/Sec) synthetase</fullName>
    </alternativeName>
</protein>
<organism>
    <name type="scientific">Actinobacillus pleuropneumoniae serotype 7 (strain AP76)</name>
    <dbReference type="NCBI Taxonomy" id="537457"/>
    <lineage>
        <taxon>Bacteria</taxon>
        <taxon>Pseudomonadati</taxon>
        <taxon>Pseudomonadota</taxon>
        <taxon>Gammaproteobacteria</taxon>
        <taxon>Pasteurellales</taxon>
        <taxon>Pasteurellaceae</taxon>
        <taxon>Actinobacillus</taxon>
    </lineage>
</organism>
<reference key="1">
    <citation type="submission" date="2008-06" db="EMBL/GenBank/DDBJ databases">
        <title>Genome and proteome analysis of A. pleuropneumoniae serotype 7.</title>
        <authorList>
            <person name="Linke B."/>
            <person name="Buettner F."/>
            <person name="Martinez-Arias R."/>
            <person name="Goesmann A."/>
            <person name="Baltes N."/>
            <person name="Tegetmeyer H."/>
            <person name="Singh M."/>
            <person name="Gerlach G.F."/>
        </authorList>
    </citation>
    <scope>NUCLEOTIDE SEQUENCE [LARGE SCALE GENOMIC DNA]</scope>
    <source>
        <strain>AP76</strain>
    </source>
</reference>
<accession>B3H1K7</accession>